<keyword id="KW-0119">Carbohydrate metabolism</keyword>
<keyword id="KW-0963">Cytoplasm</keyword>
<keyword id="KW-0313">Glucose metabolism</keyword>
<keyword id="KW-0521">NADP</keyword>
<keyword id="KW-0560">Oxidoreductase</keyword>
<keyword id="KW-1185">Reference proteome</keyword>
<evidence type="ECO:0000250" key="1">
    <source>
        <dbReference type="UniProtKB" id="P11411"/>
    </source>
</evidence>
<evidence type="ECO:0000250" key="2">
    <source>
        <dbReference type="UniProtKB" id="P11413"/>
    </source>
</evidence>
<evidence type="ECO:0000305" key="3"/>
<proteinExistence type="inferred from homology"/>
<organism>
    <name type="scientific">Takifugu rubripes</name>
    <name type="common">Japanese pufferfish</name>
    <name type="synonym">Fugu rubripes</name>
    <dbReference type="NCBI Taxonomy" id="31033"/>
    <lineage>
        <taxon>Eukaryota</taxon>
        <taxon>Metazoa</taxon>
        <taxon>Chordata</taxon>
        <taxon>Craniata</taxon>
        <taxon>Vertebrata</taxon>
        <taxon>Euteleostomi</taxon>
        <taxon>Actinopterygii</taxon>
        <taxon>Neopterygii</taxon>
        <taxon>Teleostei</taxon>
        <taxon>Neoteleostei</taxon>
        <taxon>Acanthomorphata</taxon>
        <taxon>Eupercaria</taxon>
        <taxon>Tetraodontiformes</taxon>
        <taxon>Tetradontoidea</taxon>
        <taxon>Tetraodontidae</taxon>
        <taxon>Takifugu</taxon>
    </lineage>
</organism>
<comment type="function">
    <text evidence="2">Cytosolic glucose-6-phosphate dehydrogenase that catalyzes the first and rate-limiting step of the oxidative branch within the pentose phosphate pathway/shunt, an alternative route to glycolysis for the dissimilation of carbohydrates and a major source of reducing power and metabolic intermediates for fatty acid and nucleic acid biosynthetic processes.</text>
</comment>
<comment type="catalytic activity">
    <reaction evidence="2">
        <text>D-glucose 6-phosphate + NADP(+) = 6-phospho-D-glucono-1,5-lactone + NADPH + H(+)</text>
        <dbReference type="Rhea" id="RHEA:15841"/>
        <dbReference type="ChEBI" id="CHEBI:15378"/>
        <dbReference type="ChEBI" id="CHEBI:57783"/>
        <dbReference type="ChEBI" id="CHEBI:57955"/>
        <dbReference type="ChEBI" id="CHEBI:58349"/>
        <dbReference type="ChEBI" id="CHEBI:61548"/>
        <dbReference type="EC" id="1.1.1.49"/>
    </reaction>
    <physiologicalReaction direction="left-to-right" evidence="2">
        <dbReference type="Rhea" id="RHEA:15842"/>
    </physiologicalReaction>
</comment>
<comment type="pathway">
    <text evidence="2">Carbohydrate degradation; pentose phosphate pathway; D-ribulose 5-phosphate from D-glucose 6-phosphate (oxidative stage): step 1/3.</text>
</comment>
<comment type="subcellular location">
    <subcellularLocation>
        <location evidence="2">Cytoplasm</location>
        <location evidence="2">Cytosol</location>
    </subcellularLocation>
</comment>
<comment type="similarity">
    <text evidence="3">Belongs to the glucose-6-phosphate dehydrogenase family.</text>
</comment>
<feature type="chain" id="PRO_0000068088" description="Glucose-6-phosphate 1-dehydrogenase">
    <location>
        <begin position="1"/>
        <end position="530"/>
    </location>
</feature>
<feature type="active site" description="Proton acceptor" evidence="1">
    <location>
        <position position="278"/>
    </location>
</feature>
<feature type="binding site" evidence="2">
    <location>
        <begin position="53"/>
        <end position="60"/>
    </location>
    <ligand>
        <name>NADP(+)</name>
        <dbReference type="ChEBI" id="CHEBI:58349"/>
        <label>1</label>
    </ligand>
</feature>
<feature type="binding site" evidence="2">
    <location>
        <position position="87"/>
    </location>
    <ligand>
        <name>NADP(+)</name>
        <dbReference type="ChEBI" id="CHEBI:58349"/>
        <label>1</label>
    </ligand>
</feature>
<feature type="binding site" evidence="2">
    <location>
        <position position="162"/>
    </location>
    <ligand>
        <name>NADP(+)</name>
        <dbReference type="ChEBI" id="CHEBI:58349"/>
        <label>1</label>
    </ligand>
</feature>
<feature type="binding site" evidence="2">
    <location>
        <position position="186"/>
    </location>
    <ligand>
        <name>D-glucose 6-phosphate</name>
        <dbReference type="ChEBI" id="CHEBI:61548"/>
    </ligand>
</feature>
<feature type="binding site" evidence="2">
    <location>
        <position position="186"/>
    </location>
    <ligand>
        <name>NADP(+)</name>
        <dbReference type="ChEBI" id="CHEBI:58349"/>
        <label>1</label>
    </ligand>
</feature>
<feature type="binding site" evidence="2">
    <location>
        <begin position="216"/>
        <end position="220"/>
    </location>
    <ligand>
        <name>D-glucose 6-phosphate</name>
        <dbReference type="ChEBI" id="CHEBI:61548"/>
    </ligand>
</feature>
<feature type="binding site" evidence="2">
    <location>
        <position position="254"/>
    </location>
    <ligand>
        <name>D-glucose 6-phosphate</name>
        <dbReference type="ChEBI" id="CHEBI:61548"/>
    </ligand>
</feature>
<feature type="binding site" evidence="2">
    <location>
        <position position="273"/>
    </location>
    <ligand>
        <name>D-glucose 6-phosphate</name>
        <dbReference type="ChEBI" id="CHEBI:61548"/>
    </ligand>
</feature>
<feature type="binding site" evidence="2">
    <location>
        <position position="372"/>
    </location>
    <ligand>
        <name>NADP(+)</name>
        <dbReference type="ChEBI" id="CHEBI:58349"/>
        <label>2</label>
    </ligand>
</feature>
<feature type="binding site" evidence="2">
    <location>
        <position position="375"/>
    </location>
    <ligand>
        <name>D-glucose 6-phosphate</name>
        <dbReference type="ChEBI" id="CHEBI:61548"/>
    </ligand>
</feature>
<feature type="binding site" evidence="2">
    <location>
        <position position="380"/>
    </location>
    <ligand>
        <name>D-glucose 6-phosphate</name>
        <dbReference type="ChEBI" id="CHEBI:61548"/>
    </ligand>
</feature>
<feature type="binding site" evidence="2">
    <location>
        <position position="381"/>
    </location>
    <ligand>
        <name>NADP(+)</name>
        <dbReference type="ChEBI" id="CHEBI:58349"/>
        <label>2</label>
    </ligand>
</feature>
<feature type="binding site" evidence="2">
    <location>
        <position position="385"/>
    </location>
    <ligand>
        <name>NADP(+)</name>
        <dbReference type="ChEBI" id="CHEBI:58349"/>
        <label>2</label>
    </ligand>
</feature>
<feature type="binding site" evidence="2">
    <location>
        <position position="408"/>
    </location>
    <ligand>
        <name>NADP(+)</name>
        <dbReference type="ChEBI" id="CHEBI:58349"/>
        <label>2</label>
    </ligand>
</feature>
<feature type="binding site" evidence="2">
    <location>
        <position position="410"/>
    </location>
    <ligand>
        <name>D-glucose 6-phosphate</name>
        <dbReference type="ChEBI" id="CHEBI:61548"/>
    </ligand>
</feature>
<feature type="binding site" evidence="2">
    <location>
        <begin position="416"/>
        <end position="418"/>
    </location>
    <ligand>
        <name>NADP(+)</name>
        <dbReference type="ChEBI" id="CHEBI:58349"/>
        <label>2</label>
    </ligand>
</feature>
<feature type="binding site" evidence="2">
    <location>
        <begin position="436"/>
        <end position="438"/>
    </location>
    <ligand>
        <name>NADP(+)</name>
        <dbReference type="ChEBI" id="CHEBI:58349"/>
        <label>2</label>
    </ligand>
</feature>
<feature type="binding site" evidence="2">
    <location>
        <position position="502"/>
    </location>
    <ligand>
        <name>NADP(+)</name>
        <dbReference type="ChEBI" id="CHEBI:58349"/>
        <label>2</label>
    </ligand>
</feature>
<feature type="binding site" evidence="2">
    <location>
        <position position="518"/>
    </location>
    <ligand>
        <name>NADP(+)</name>
        <dbReference type="ChEBI" id="CHEBI:58349"/>
        <label>2</label>
    </ligand>
</feature>
<feature type="binding site" evidence="2">
    <location>
        <position position="524"/>
    </location>
    <ligand>
        <name>NADP(+)</name>
        <dbReference type="ChEBI" id="CHEBI:58349"/>
        <label>2</label>
    </ligand>
</feature>
<accession>P54996</accession>
<dbReference type="EC" id="1.1.1.49" evidence="2"/>
<dbReference type="EMBL" id="X83611">
    <property type="protein sequence ID" value="CAA58590.2"/>
    <property type="molecule type" value="Genomic_DNA"/>
</dbReference>
<dbReference type="PIR" id="A56841">
    <property type="entry name" value="A56841"/>
</dbReference>
<dbReference type="SMR" id="P54996"/>
<dbReference type="STRING" id="31033.ENSTRUP00000055877"/>
<dbReference type="InParanoid" id="P54996"/>
<dbReference type="UniPathway" id="UPA00115">
    <property type="reaction ID" value="UER00408"/>
</dbReference>
<dbReference type="Proteomes" id="UP000005226">
    <property type="component" value="Unplaced"/>
</dbReference>
<dbReference type="GO" id="GO:0005829">
    <property type="term" value="C:cytosol"/>
    <property type="evidence" value="ECO:0007669"/>
    <property type="project" value="UniProtKB-SubCell"/>
</dbReference>
<dbReference type="GO" id="GO:0004345">
    <property type="term" value="F:glucose-6-phosphate dehydrogenase activity"/>
    <property type="evidence" value="ECO:0000250"/>
    <property type="project" value="UniProtKB"/>
</dbReference>
<dbReference type="GO" id="GO:0050661">
    <property type="term" value="F:NADP binding"/>
    <property type="evidence" value="ECO:0007669"/>
    <property type="project" value="InterPro"/>
</dbReference>
<dbReference type="GO" id="GO:0051156">
    <property type="term" value="P:glucose 6-phosphate metabolic process"/>
    <property type="evidence" value="ECO:0000250"/>
    <property type="project" value="UniProtKB"/>
</dbReference>
<dbReference type="GO" id="GO:0006006">
    <property type="term" value="P:glucose metabolic process"/>
    <property type="evidence" value="ECO:0007669"/>
    <property type="project" value="UniProtKB-KW"/>
</dbReference>
<dbReference type="GO" id="GO:0006739">
    <property type="term" value="P:NADP metabolic process"/>
    <property type="evidence" value="ECO:0000250"/>
    <property type="project" value="UniProtKB"/>
</dbReference>
<dbReference type="GO" id="GO:0009051">
    <property type="term" value="P:pentose-phosphate shunt, oxidative branch"/>
    <property type="evidence" value="ECO:0007669"/>
    <property type="project" value="TreeGrafter"/>
</dbReference>
<dbReference type="FunFam" id="3.30.360.10:FF:000013">
    <property type="entry name" value="Glucose-6-phosphate 1-dehydrogenase"/>
    <property type="match status" value="1"/>
</dbReference>
<dbReference type="FunFam" id="3.40.50.720:FF:000111">
    <property type="entry name" value="Glucose-6-phosphate 1-dehydrogenase"/>
    <property type="match status" value="1"/>
</dbReference>
<dbReference type="Gene3D" id="3.30.360.10">
    <property type="entry name" value="Dihydrodipicolinate Reductase, domain 2"/>
    <property type="match status" value="1"/>
</dbReference>
<dbReference type="Gene3D" id="3.40.50.720">
    <property type="entry name" value="NAD(P)-binding Rossmann-like Domain"/>
    <property type="match status" value="1"/>
</dbReference>
<dbReference type="HAMAP" id="MF_00966">
    <property type="entry name" value="G6PD"/>
    <property type="match status" value="1"/>
</dbReference>
<dbReference type="InterPro" id="IPR001282">
    <property type="entry name" value="G6P_DH"/>
</dbReference>
<dbReference type="InterPro" id="IPR019796">
    <property type="entry name" value="G6P_DH_AS"/>
</dbReference>
<dbReference type="InterPro" id="IPR022675">
    <property type="entry name" value="G6P_DH_C"/>
</dbReference>
<dbReference type="InterPro" id="IPR022674">
    <property type="entry name" value="G6P_DH_NAD-bd"/>
</dbReference>
<dbReference type="InterPro" id="IPR036291">
    <property type="entry name" value="NAD(P)-bd_dom_sf"/>
</dbReference>
<dbReference type="NCBIfam" id="TIGR00871">
    <property type="entry name" value="zwf"/>
    <property type="match status" value="1"/>
</dbReference>
<dbReference type="PANTHER" id="PTHR23429:SF0">
    <property type="entry name" value="GLUCOSE-6-PHOSPHATE 1-DEHYDROGENASE"/>
    <property type="match status" value="1"/>
</dbReference>
<dbReference type="PANTHER" id="PTHR23429">
    <property type="entry name" value="GLUCOSE-6-PHOSPHATE 1-DEHYDROGENASE G6PD"/>
    <property type="match status" value="1"/>
</dbReference>
<dbReference type="Pfam" id="PF02781">
    <property type="entry name" value="G6PD_C"/>
    <property type="match status" value="1"/>
</dbReference>
<dbReference type="Pfam" id="PF00479">
    <property type="entry name" value="G6PD_N"/>
    <property type="match status" value="1"/>
</dbReference>
<dbReference type="PIRSF" id="PIRSF000110">
    <property type="entry name" value="G6PD"/>
    <property type="match status" value="1"/>
</dbReference>
<dbReference type="PRINTS" id="PR00079">
    <property type="entry name" value="G6PDHDRGNASE"/>
</dbReference>
<dbReference type="SUPFAM" id="SSF55347">
    <property type="entry name" value="Glyceraldehyde-3-phosphate dehydrogenase-like, C-terminal domain"/>
    <property type="match status" value="1"/>
</dbReference>
<dbReference type="SUPFAM" id="SSF51735">
    <property type="entry name" value="NAD(P)-binding Rossmann-fold domains"/>
    <property type="match status" value="1"/>
</dbReference>
<dbReference type="PROSITE" id="PS00069">
    <property type="entry name" value="G6P_DEHYDROGENASE"/>
    <property type="match status" value="1"/>
</dbReference>
<reference key="1">
    <citation type="journal article" date="1995" name="Genomics">
        <title>Genomic structure and sequence of the Fugu rubripes glucose-6-phosphate dehydrogenase gene (G6PD).</title>
        <authorList>
            <person name="Mason P.J."/>
            <person name="Stevens D.J."/>
            <person name="Luzzatto L."/>
            <person name="Brenner S."/>
            <person name="Aparicio S."/>
        </authorList>
    </citation>
    <scope>NUCLEOTIDE SEQUENCE [GENOMIC DNA]</scope>
</reference>
<gene>
    <name type="primary">g6pd</name>
</gene>
<protein>
    <recommendedName>
        <fullName>Glucose-6-phosphate 1-dehydrogenase</fullName>
        <shortName>G6PD</shortName>
        <ecNumber evidence="2">1.1.1.49</ecNumber>
    </recommendedName>
</protein>
<name>G6PD_TAKRU</name>
<sequence length="530" mass="60469">MMIILFNCFFCASFREDGQHPTVSLGGVWGAAKELHEDKEFHQSDVHVFIIMGASGDLAKKKIYPTLWWLFRDGLLPEQTYFVGFARSALTVDAIRTSCMPYLKVTETESDRLSAFFSRNSYISGNYTAGGSFSELNAHIMSLPGASDANRLFYLALPPTIYHSVTENIKHFCMSAKGWNRVIVEKPFGHDLQSSEELSTHLSSLFTEDQIYRIDHYLGKEMVQNLMVLRFGNRIFGPIWNRDNVACVVLTFKEPFGTQGRGGYFDDFGIIRDVMQNHMLQMLCLVAMEKPASTNSDDVRDEKVKVLKCIVPASMSDVVLGQYVGDPEGEGDAKLGYLDDPTVPKGSTQATFATVVLYVHNERWDGVPFILRCGKALNERKAEVRLQFTDVPGDIFRNQCYRNELVVRVQPNEAIYAKMMSKKPGVYFTPEETELDLTYKSRYKDVKLPDAYERLILDVFCGSQMHFVASDELREAWRIFTPLLHQIEKEKPKPIPYKYGSRGPAEADELEKRVGFRYEGTYKWVNPHRL</sequence>